<organism>
    <name type="scientific">Methylocella silvestris (strain DSM 15510 / CIP 108128 / LMG 27833 / NCIMB 13906 / BL2)</name>
    <dbReference type="NCBI Taxonomy" id="395965"/>
    <lineage>
        <taxon>Bacteria</taxon>
        <taxon>Pseudomonadati</taxon>
        <taxon>Pseudomonadota</taxon>
        <taxon>Alphaproteobacteria</taxon>
        <taxon>Hyphomicrobiales</taxon>
        <taxon>Beijerinckiaceae</taxon>
        <taxon>Methylocella</taxon>
    </lineage>
</organism>
<proteinExistence type="inferred from homology"/>
<accession>B8ESN3</accession>
<dbReference type="EC" id="2.1.3.15" evidence="1"/>
<dbReference type="EMBL" id="CP001280">
    <property type="protein sequence ID" value="ACK50368.1"/>
    <property type="molecule type" value="Genomic_DNA"/>
</dbReference>
<dbReference type="RefSeq" id="WP_012590438.1">
    <property type="nucleotide sequence ID" value="NC_011666.1"/>
</dbReference>
<dbReference type="SMR" id="B8ESN3"/>
<dbReference type="STRING" id="395965.Msil_1403"/>
<dbReference type="KEGG" id="msl:Msil_1403"/>
<dbReference type="eggNOG" id="COG0777">
    <property type="taxonomic scope" value="Bacteria"/>
</dbReference>
<dbReference type="HOGENOM" id="CLU_015486_1_0_5"/>
<dbReference type="OrthoDB" id="9772975at2"/>
<dbReference type="UniPathway" id="UPA00655">
    <property type="reaction ID" value="UER00711"/>
</dbReference>
<dbReference type="Proteomes" id="UP000002257">
    <property type="component" value="Chromosome"/>
</dbReference>
<dbReference type="GO" id="GO:0009329">
    <property type="term" value="C:acetate CoA-transferase complex"/>
    <property type="evidence" value="ECO:0007669"/>
    <property type="project" value="TreeGrafter"/>
</dbReference>
<dbReference type="GO" id="GO:0003989">
    <property type="term" value="F:acetyl-CoA carboxylase activity"/>
    <property type="evidence" value="ECO:0007669"/>
    <property type="project" value="InterPro"/>
</dbReference>
<dbReference type="GO" id="GO:0005524">
    <property type="term" value="F:ATP binding"/>
    <property type="evidence" value="ECO:0007669"/>
    <property type="project" value="UniProtKB-KW"/>
</dbReference>
<dbReference type="GO" id="GO:0016743">
    <property type="term" value="F:carboxyl- or carbamoyltransferase activity"/>
    <property type="evidence" value="ECO:0007669"/>
    <property type="project" value="UniProtKB-UniRule"/>
</dbReference>
<dbReference type="GO" id="GO:0006633">
    <property type="term" value="P:fatty acid biosynthetic process"/>
    <property type="evidence" value="ECO:0007669"/>
    <property type="project" value="UniProtKB-KW"/>
</dbReference>
<dbReference type="GO" id="GO:2001295">
    <property type="term" value="P:malonyl-CoA biosynthetic process"/>
    <property type="evidence" value="ECO:0007669"/>
    <property type="project" value="UniProtKB-UniRule"/>
</dbReference>
<dbReference type="Gene3D" id="3.90.226.10">
    <property type="entry name" value="2-enoyl-CoA Hydratase, Chain A, domain 1"/>
    <property type="match status" value="1"/>
</dbReference>
<dbReference type="HAMAP" id="MF_01395">
    <property type="entry name" value="AcetylCoA_CT_beta"/>
    <property type="match status" value="1"/>
</dbReference>
<dbReference type="InterPro" id="IPR034733">
    <property type="entry name" value="AcCoA_carboxyl_beta"/>
</dbReference>
<dbReference type="InterPro" id="IPR000438">
    <property type="entry name" value="Acetyl_CoA_COase_Trfase_b_su"/>
</dbReference>
<dbReference type="InterPro" id="IPR029045">
    <property type="entry name" value="ClpP/crotonase-like_dom_sf"/>
</dbReference>
<dbReference type="InterPro" id="IPR011762">
    <property type="entry name" value="COA_CT_N"/>
</dbReference>
<dbReference type="NCBIfam" id="TIGR00515">
    <property type="entry name" value="accD"/>
    <property type="match status" value="1"/>
</dbReference>
<dbReference type="PANTHER" id="PTHR42995">
    <property type="entry name" value="ACETYL-COENZYME A CARBOXYLASE CARBOXYL TRANSFERASE SUBUNIT BETA, CHLOROPLASTIC"/>
    <property type="match status" value="1"/>
</dbReference>
<dbReference type="PANTHER" id="PTHR42995:SF5">
    <property type="entry name" value="ACETYL-COENZYME A CARBOXYLASE CARBOXYL TRANSFERASE SUBUNIT BETA, CHLOROPLASTIC"/>
    <property type="match status" value="1"/>
</dbReference>
<dbReference type="Pfam" id="PF01039">
    <property type="entry name" value="Carboxyl_trans"/>
    <property type="match status" value="1"/>
</dbReference>
<dbReference type="PRINTS" id="PR01070">
    <property type="entry name" value="ACCCTRFRASEB"/>
</dbReference>
<dbReference type="SUPFAM" id="SSF52096">
    <property type="entry name" value="ClpP/crotonase"/>
    <property type="match status" value="1"/>
</dbReference>
<dbReference type="PROSITE" id="PS50980">
    <property type="entry name" value="COA_CT_NTER"/>
    <property type="match status" value="1"/>
</dbReference>
<protein>
    <recommendedName>
        <fullName evidence="1">Acetyl-coenzyme A carboxylase carboxyl transferase subunit beta</fullName>
        <shortName evidence="1">ACCase subunit beta</shortName>
        <shortName evidence="1">Acetyl-CoA carboxylase carboxyltransferase subunit beta</shortName>
        <ecNumber evidence="1">2.1.3.15</ecNumber>
    </recommendedName>
</protein>
<evidence type="ECO:0000255" key="1">
    <source>
        <dbReference type="HAMAP-Rule" id="MF_01395"/>
    </source>
</evidence>
<evidence type="ECO:0000255" key="2">
    <source>
        <dbReference type="PROSITE-ProRule" id="PRU01136"/>
    </source>
</evidence>
<reference key="1">
    <citation type="journal article" date="2010" name="J. Bacteriol.">
        <title>Complete genome sequence of the aerobic facultative methanotroph Methylocella silvestris BL2.</title>
        <authorList>
            <person name="Chen Y."/>
            <person name="Crombie A."/>
            <person name="Rahman M.T."/>
            <person name="Dedysh S.N."/>
            <person name="Liesack W."/>
            <person name="Stott M.B."/>
            <person name="Alam M."/>
            <person name="Theisen A.R."/>
            <person name="Murrell J.C."/>
            <person name="Dunfield P.F."/>
        </authorList>
    </citation>
    <scope>NUCLEOTIDE SEQUENCE [LARGE SCALE GENOMIC DNA]</scope>
    <source>
        <strain>DSM 15510 / CIP 108128 / LMG 27833 / NCIMB 13906 / BL2</strain>
    </source>
</reference>
<feature type="chain" id="PRO_0000389801" description="Acetyl-coenzyme A carboxylase carboxyl transferase subunit beta">
    <location>
        <begin position="1"/>
        <end position="288"/>
    </location>
</feature>
<feature type="domain" description="CoA carboxyltransferase N-terminal" evidence="2">
    <location>
        <begin position="24"/>
        <end position="288"/>
    </location>
</feature>
<name>ACCD_METSB</name>
<keyword id="KW-0067">ATP-binding</keyword>
<keyword id="KW-0963">Cytoplasm</keyword>
<keyword id="KW-0275">Fatty acid biosynthesis</keyword>
<keyword id="KW-0276">Fatty acid metabolism</keyword>
<keyword id="KW-0444">Lipid biosynthesis</keyword>
<keyword id="KW-0443">Lipid metabolism</keyword>
<keyword id="KW-0547">Nucleotide-binding</keyword>
<keyword id="KW-1185">Reference proteome</keyword>
<keyword id="KW-0808">Transferase</keyword>
<sequence>MNWISNVVPPKVRSFLRRETPENLWVKCPESGELVFHKDLEANLFVVPGSGYHMRLSPKARLANLFDEGIYEDLPTPEAPVDPLKFRDVKRYTDRLKEYRAKTEAQDCVKLAAGRLEGMEIVAAIQDFDFLAGSLGMAAGEAIITGMTTALNRRAPFIIFTASGGARMQEGIFSLMQMPRTTIAVQRLREANLPYIVVLTNPTTGGVTASYAMLGDIHIAEPGAVIGFAGPRVIEQTIRERLPEGFQRAEYLESHGMIDMVVQRQDMRATLARLCSILTRTPRASEAA</sequence>
<comment type="function">
    <text evidence="1">Component of the acetyl coenzyme A carboxylase (ACC) complex. Biotin carboxylase (BC) catalyzes the carboxylation of biotin on its carrier protein (BCCP) and then the CO(2) group is transferred by the transcarboxylase to acetyl-CoA to form malonyl-CoA.</text>
</comment>
<comment type="catalytic activity">
    <reaction evidence="1">
        <text>N(6)-carboxybiotinyl-L-lysyl-[protein] + acetyl-CoA = N(6)-biotinyl-L-lysyl-[protein] + malonyl-CoA</text>
        <dbReference type="Rhea" id="RHEA:54728"/>
        <dbReference type="Rhea" id="RHEA-COMP:10505"/>
        <dbReference type="Rhea" id="RHEA-COMP:10506"/>
        <dbReference type="ChEBI" id="CHEBI:57288"/>
        <dbReference type="ChEBI" id="CHEBI:57384"/>
        <dbReference type="ChEBI" id="CHEBI:83144"/>
        <dbReference type="ChEBI" id="CHEBI:83145"/>
        <dbReference type="EC" id="2.1.3.15"/>
    </reaction>
</comment>
<comment type="pathway">
    <text evidence="1">Lipid metabolism; malonyl-CoA biosynthesis; malonyl-CoA from acetyl-CoA: step 1/1.</text>
</comment>
<comment type="subunit">
    <text evidence="1">Acetyl-CoA carboxylase is a heterohexamer composed of biotin carboxyl carrier protein (AccB), biotin carboxylase (AccC) and two subunits each of ACCase subunit alpha (AccA) and ACCase subunit beta (AccD).</text>
</comment>
<comment type="subcellular location">
    <subcellularLocation>
        <location evidence="1">Cytoplasm</location>
    </subcellularLocation>
</comment>
<comment type="similarity">
    <text evidence="1">Belongs to the AccD/PCCB family.</text>
</comment>
<gene>
    <name evidence="1" type="primary">accD</name>
    <name type="ordered locus">Msil_1403</name>
</gene>